<proteinExistence type="inferred from homology"/>
<organism>
    <name type="scientific">Cereibacter sphaeroides (strain KD131 / KCTC 12085)</name>
    <name type="common">Rhodobacter sphaeroides</name>
    <dbReference type="NCBI Taxonomy" id="557760"/>
    <lineage>
        <taxon>Bacteria</taxon>
        <taxon>Pseudomonadati</taxon>
        <taxon>Pseudomonadota</taxon>
        <taxon>Alphaproteobacteria</taxon>
        <taxon>Rhodobacterales</taxon>
        <taxon>Paracoccaceae</taxon>
        <taxon>Cereibacter</taxon>
    </lineage>
</organism>
<reference key="1">
    <citation type="journal article" date="2009" name="J. Bacteriol.">
        <title>Complete genome sequence of Rhodobacter sphaeroides KD131.</title>
        <authorList>
            <person name="Lim S.-K."/>
            <person name="Kim S.J."/>
            <person name="Cha S.H."/>
            <person name="Oh Y.-K."/>
            <person name="Rhee H.-J."/>
            <person name="Kim M.-S."/>
            <person name="Lee J.K."/>
        </authorList>
    </citation>
    <scope>NUCLEOTIDE SEQUENCE [LARGE SCALE GENOMIC DNA]</scope>
    <source>
        <strain>KD131 / KCTC 12085</strain>
    </source>
</reference>
<gene>
    <name evidence="1" type="primary">bpt</name>
    <name type="ordered locus">RSKD131_0950</name>
</gene>
<name>BPT_CERSK</name>
<keyword id="KW-0012">Acyltransferase</keyword>
<keyword id="KW-0963">Cytoplasm</keyword>
<keyword id="KW-0808">Transferase</keyword>
<feature type="chain" id="PRO_1000147807" description="Aspartate/glutamate leucyltransferase">
    <location>
        <begin position="1"/>
        <end position="280"/>
    </location>
</feature>
<sequence>MRHTLPIAPQFYVTAPQSCPYLEGRLERKLFTALQGEHAQKLNDTLSKQGFRRSQNVLYRPSCAECSACLSARIRVADFEPTRTQRRVMKRNADLRRNATSPWATEDQYALFRRYLDDRHADGGMADMDIFEFAAMIEETPIRSRVIEYSRPGDTPSNRPLSAVCLTDIFDDGLSMVYSFYDPDLAGRSLGAYVILDHIEIAREAGLPYVYLGYWVPGSRKMGYKASYSALEIYKGGRWQDIGQPSDHRAELHPLSVDPIAEQVARISLPEARSGDRSRD</sequence>
<accession>B9KRL8</accession>
<comment type="function">
    <text evidence="1">Functions in the N-end rule pathway of protein degradation where it conjugates Leu from its aminoacyl-tRNA to the N-termini of proteins containing an N-terminal aspartate or glutamate.</text>
</comment>
<comment type="catalytic activity">
    <reaction evidence="1">
        <text>N-terminal L-glutamyl-[protein] + L-leucyl-tRNA(Leu) = N-terminal L-leucyl-L-glutamyl-[protein] + tRNA(Leu) + H(+)</text>
        <dbReference type="Rhea" id="RHEA:50412"/>
        <dbReference type="Rhea" id="RHEA-COMP:9613"/>
        <dbReference type="Rhea" id="RHEA-COMP:9622"/>
        <dbReference type="Rhea" id="RHEA-COMP:12664"/>
        <dbReference type="Rhea" id="RHEA-COMP:12668"/>
        <dbReference type="ChEBI" id="CHEBI:15378"/>
        <dbReference type="ChEBI" id="CHEBI:64721"/>
        <dbReference type="ChEBI" id="CHEBI:78442"/>
        <dbReference type="ChEBI" id="CHEBI:78494"/>
        <dbReference type="ChEBI" id="CHEBI:133041"/>
        <dbReference type="EC" id="2.3.2.29"/>
    </reaction>
</comment>
<comment type="catalytic activity">
    <reaction evidence="1">
        <text>N-terminal L-aspartyl-[protein] + L-leucyl-tRNA(Leu) = N-terminal L-leucyl-L-aspartyl-[protein] + tRNA(Leu) + H(+)</text>
        <dbReference type="Rhea" id="RHEA:50420"/>
        <dbReference type="Rhea" id="RHEA-COMP:9613"/>
        <dbReference type="Rhea" id="RHEA-COMP:9622"/>
        <dbReference type="Rhea" id="RHEA-COMP:12669"/>
        <dbReference type="Rhea" id="RHEA-COMP:12674"/>
        <dbReference type="ChEBI" id="CHEBI:15378"/>
        <dbReference type="ChEBI" id="CHEBI:64720"/>
        <dbReference type="ChEBI" id="CHEBI:78442"/>
        <dbReference type="ChEBI" id="CHEBI:78494"/>
        <dbReference type="ChEBI" id="CHEBI:133042"/>
        <dbReference type="EC" id="2.3.2.29"/>
    </reaction>
</comment>
<comment type="subcellular location">
    <subcellularLocation>
        <location evidence="1">Cytoplasm</location>
    </subcellularLocation>
</comment>
<comment type="similarity">
    <text evidence="1">Belongs to the R-transferase family. Bpt subfamily.</text>
</comment>
<dbReference type="EC" id="2.3.2.29" evidence="1"/>
<dbReference type="EMBL" id="CP001150">
    <property type="protein sequence ID" value="ACM00810.1"/>
    <property type="molecule type" value="Genomic_DNA"/>
</dbReference>
<dbReference type="RefSeq" id="WP_011840927.1">
    <property type="nucleotide sequence ID" value="NC_011963.1"/>
</dbReference>
<dbReference type="SMR" id="B9KRL8"/>
<dbReference type="GeneID" id="67446389"/>
<dbReference type="KEGG" id="rsk:RSKD131_0950"/>
<dbReference type="HOGENOM" id="CLU_077607_1_0_5"/>
<dbReference type="GO" id="GO:0005737">
    <property type="term" value="C:cytoplasm"/>
    <property type="evidence" value="ECO:0007669"/>
    <property type="project" value="UniProtKB-SubCell"/>
</dbReference>
<dbReference type="GO" id="GO:0004057">
    <property type="term" value="F:arginyl-tRNA--protein transferase activity"/>
    <property type="evidence" value="ECO:0007669"/>
    <property type="project" value="InterPro"/>
</dbReference>
<dbReference type="GO" id="GO:0008914">
    <property type="term" value="F:leucyl-tRNA--protein transferase activity"/>
    <property type="evidence" value="ECO:0007669"/>
    <property type="project" value="UniProtKB-UniRule"/>
</dbReference>
<dbReference type="GO" id="GO:0071596">
    <property type="term" value="P:ubiquitin-dependent protein catabolic process via the N-end rule pathway"/>
    <property type="evidence" value="ECO:0007669"/>
    <property type="project" value="InterPro"/>
</dbReference>
<dbReference type="HAMAP" id="MF_00689">
    <property type="entry name" value="Bpt"/>
    <property type="match status" value="1"/>
</dbReference>
<dbReference type="InterPro" id="IPR016181">
    <property type="entry name" value="Acyl_CoA_acyltransferase"/>
</dbReference>
<dbReference type="InterPro" id="IPR017138">
    <property type="entry name" value="Asp_Glu_LeuTrfase"/>
</dbReference>
<dbReference type="InterPro" id="IPR030700">
    <property type="entry name" value="N-end_Aminoacyl_Trfase"/>
</dbReference>
<dbReference type="InterPro" id="IPR007472">
    <property type="entry name" value="N-end_Aminoacyl_Trfase_C"/>
</dbReference>
<dbReference type="InterPro" id="IPR007471">
    <property type="entry name" value="N-end_Aminoacyl_Trfase_N"/>
</dbReference>
<dbReference type="NCBIfam" id="NF002341">
    <property type="entry name" value="PRK01305.1-1"/>
    <property type="match status" value="1"/>
</dbReference>
<dbReference type="NCBIfam" id="NF002342">
    <property type="entry name" value="PRK01305.1-3"/>
    <property type="match status" value="1"/>
</dbReference>
<dbReference type="NCBIfam" id="NF002343">
    <property type="entry name" value="PRK01305.1-4"/>
    <property type="match status" value="1"/>
</dbReference>
<dbReference type="NCBIfam" id="NF002346">
    <property type="entry name" value="PRK01305.2-3"/>
    <property type="match status" value="1"/>
</dbReference>
<dbReference type="PANTHER" id="PTHR21367">
    <property type="entry name" value="ARGININE-TRNA-PROTEIN TRANSFERASE 1"/>
    <property type="match status" value="1"/>
</dbReference>
<dbReference type="PANTHER" id="PTHR21367:SF1">
    <property type="entry name" value="ARGINYL-TRNA--PROTEIN TRANSFERASE 1"/>
    <property type="match status" value="1"/>
</dbReference>
<dbReference type="Pfam" id="PF04377">
    <property type="entry name" value="ATE_C"/>
    <property type="match status" value="1"/>
</dbReference>
<dbReference type="Pfam" id="PF04376">
    <property type="entry name" value="ATE_N"/>
    <property type="match status" value="1"/>
</dbReference>
<dbReference type="PIRSF" id="PIRSF037208">
    <property type="entry name" value="ATE_pro_prd"/>
    <property type="match status" value="1"/>
</dbReference>
<dbReference type="SUPFAM" id="SSF55729">
    <property type="entry name" value="Acyl-CoA N-acyltransferases (Nat)"/>
    <property type="match status" value="1"/>
</dbReference>
<evidence type="ECO:0000255" key="1">
    <source>
        <dbReference type="HAMAP-Rule" id="MF_00689"/>
    </source>
</evidence>
<protein>
    <recommendedName>
        <fullName evidence="1">Aspartate/glutamate leucyltransferase</fullName>
        <ecNumber evidence="1">2.3.2.29</ecNumber>
    </recommendedName>
</protein>